<evidence type="ECO:0000255" key="1">
    <source>
        <dbReference type="HAMAP-Rule" id="MF_00337"/>
    </source>
</evidence>
<dbReference type="EC" id="3.1.11.6" evidence="1"/>
<dbReference type="EMBL" id="CP001600">
    <property type="protein sequence ID" value="ACR68275.1"/>
    <property type="molecule type" value="Genomic_DNA"/>
</dbReference>
<dbReference type="RefSeq" id="WP_015870456.1">
    <property type="nucleotide sequence ID" value="NZ_CP169062.1"/>
</dbReference>
<dbReference type="SMR" id="C5BCI1"/>
<dbReference type="STRING" id="67780.B6E78_15685"/>
<dbReference type="GeneID" id="69538097"/>
<dbReference type="KEGG" id="eic:NT01EI_1063"/>
<dbReference type="PATRIC" id="fig|634503.3.peg.963"/>
<dbReference type="HOGENOM" id="CLU_145918_3_3_6"/>
<dbReference type="OrthoDB" id="5591562at2"/>
<dbReference type="Proteomes" id="UP000001485">
    <property type="component" value="Chromosome"/>
</dbReference>
<dbReference type="GO" id="GO:0005829">
    <property type="term" value="C:cytosol"/>
    <property type="evidence" value="ECO:0007669"/>
    <property type="project" value="TreeGrafter"/>
</dbReference>
<dbReference type="GO" id="GO:0009318">
    <property type="term" value="C:exodeoxyribonuclease VII complex"/>
    <property type="evidence" value="ECO:0007669"/>
    <property type="project" value="InterPro"/>
</dbReference>
<dbReference type="GO" id="GO:0008855">
    <property type="term" value="F:exodeoxyribonuclease VII activity"/>
    <property type="evidence" value="ECO:0007669"/>
    <property type="project" value="UniProtKB-UniRule"/>
</dbReference>
<dbReference type="GO" id="GO:0006308">
    <property type="term" value="P:DNA catabolic process"/>
    <property type="evidence" value="ECO:0007669"/>
    <property type="project" value="UniProtKB-UniRule"/>
</dbReference>
<dbReference type="FunFam" id="1.10.287.1040:FF:000001">
    <property type="entry name" value="Exodeoxyribonuclease 7 small subunit"/>
    <property type="match status" value="1"/>
</dbReference>
<dbReference type="Gene3D" id="1.10.287.1040">
    <property type="entry name" value="Exonuclease VII, small subunit"/>
    <property type="match status" value="1"/>
</dbReference>
<dbReference type="HAMAP" id="MF_00337">
    <property type="entry name" value="Exonuc_7_S"/>
    <property type="match status" value="1"/>
</dbReference>
<dbReference type="InterPro" id="IPR003761">
    <property type="entry name" value="Exonuc_VII_S"/>
</dbReference>
<dbReference type="InterPro" id="IPR037004">
    <property type="entry name" value="Exonuc_VII_ssu_sf"/>
</dbReference>
<dbReference type="NCBIfam" id="NF002137">
    <property type="entry name" value="PRK00977.1-1"/>
    <property type="match status" value="1"/>
</dbReference>
<dbReference type="NCBIfam" id="NF002140">
    <property type="entry name" value="PRK00977.1-4"/>
    <property type="match status" value="1"/>
</dbReference>
<dbReference type="NCBIfam" id="TIGR01280">
    <property type="entry name" value="xseB"/>
    <property type="match status" value="1"/>
</dbReference>
<dbReference type="PANTHER" id="PTHR34137">
    <property type="entry name" value="EXODEOXYRIBONUCLEASE 7 SMALL SUBUNIT"/>
    <property type="match status" value="1"/>
</dbReference>
<dbReference type="PANTHER" id="PTHR34137:SF1">
    <property type="entry name" value="EXODEOXYRIBONUCLEASE 7 SMALL SUBUNIT"/>
    <property type="match status" value="1"/>
</dbReference>
<dbReference type="Pfam" id="PF02609">
    <property type="entry name" value="Exonuc_VII_S"/>
    <property type="match status" value="1"/>
</dbReference>
<dbReference type="PIRSF" id="PIRSF006488">
    <property type="entry name" value="Exonuc_VII_S"/>
    <property type="match status" value="1"/>
</dbReference>
<dbReference type="SUPFAM" id="SSF116842">
    <property type="entry name" value="XseB-like"/>
    <property type="match status" value="1"/>
</dbReference>
<sequence>MAKKAPAAPAFEQALSELEQIVVRLESGDLPLEEALSEFERGIRLARQGQQTLQQAEQRVKILLSDDQDAPLSPFNAEQE</sequence>
<protein>
    <recommendedName>
        <fullName evidence="1">Exodeoxyribonuclease 7 small subunit</fullName>
        <ecNumber evidence="1">3.1.11.6</ecNumber>
    </recommendedName>
    <alternativeName>
        <fullName evidence="1">Exodeoxyribonuclease VII small subunit</fullName>
        <shortName evidence="1">Exonuclease VII small subunit</shortName>
    </alternativeName>
</protein>
<gene>
    <name evidence="1" type="primary">xseB</name>
    <name type="ordered locus">NT01EI_1063</name>
</gene>
<comment type="function">
    <text evidence="1">Bidirectionally degrades single-stranded DNA into large acid-insoluble oligonucleotides, which are then degraded further into small acid-soluble oligonucleotides.</text>
</comment>
<comment type="catalytic activity">
    <reaction evidence="1">
        <text>Exonucleolytic cleavage in either 5'- to 3'- or 3'- to 5'-direction to yield nucleoside 5'-phosphates.</text>
        <dbReference type="EC" id="3.1.11.6"/>
    </reaction>
</comment>
<comment type="subunit">
    <text evidence="1">Heterooligomer composed of large and small subunits.</text>
</comment>
<comment type="subcellular location">
    <subcellularLocation>
        <location evidence="1">Cytoplasm</location>
    </subcellularLocation>
</comment>
<comment type="similarity">
    <text evidence="1">Belongs to the XseB family.</text>
</comment>
<feature type="chain" id="PRO_1000205222" description="Exodeoxyribonuclease 7 small subunit">
    <location>
        <begin position="1"/>
        <end position="80"/>
    </location>
</feature>
<organism>
    <name type="scientific">Edwardsiella ictaluri (strain 93-146)</name>
    <dbReference type="NCBI Taxonomy" id="634503"/>
    <lineage>
        <taxon>Bacteria</taxon>
        <taxon>Pseudomonadati</taxon>
        <taxon>Pseudomonadota</taxon>
        <taxon>Gammaproteobacteria</taxon>
        <taxon>Enterobacterales</taxon>
        <taxon>Hafniaceae</taxon>
        <taxon>Edwardsiella</taxon>
    </lineage>
</organism>
<reference key="1">
    <citation type="submission" date="2009-03" db="EMBL/GenBank/DDBJ databases">
        <title>Complete genome sequence of Edwardsiella ictaluri 93-146.</title>
        <authorList>
            <person name="Williams M.L."/>
            <person name="Gillaspy A.F."/>
            <person name="Dyer D.W."/>
            <person name="Thune R.L."/>
            <person name="Waldbieser G.C."/>
            <person name="Schuster S.C."/>
            <person name="Gipson J."/>
            <person name="Zaitshik J."/>
            <person name="Landry C."/>
            <person name="Lawrence M.L."/>
        </authorList>
    </citation>
    <scope>NUCLEOTIDE SEQUENCE [LARGE SCALE GENOMIC DNA]</scope>
    <source>
        <strain>93-146</strain>
    </source>
</reference>
<keyword id="KW-0963">Cytoplasm</keyword>
<keyword id="KW-0269">Exonuclease</keyword>
<keyword id="KW-0378">Hydrolase</keyword>
<keyword id="KW-0540">Nuclease</keyword>
<name>EX7S_EDWI9</name>
<proteinExistence type="inferred from homology"/>
<accession>C5BCI1</accession>